<name>RS15_SYNY3</name>
<keyword id="KW-1185">Reference proteome</keyword>
<keyword id="KW-0687">Ribonucleoprotein</keyword>
<keyword id="KW-0689">Ribosomal protein</keyword>
<keyword id="KW-0694">RNA-binding</keyword>
<keyword id="KW-0699">rRNA-binding</keyword>
<gene>
    <name evidence="1" type="primary">rpsO</name>
    <name evidence="1" type="synonym">rps15</name>
    <name type="ordered locus">ssl1784</name>
</gene>
<sequence length="89" mass="10373">MSLTQIRKQELMTEYQAHETDTGSADLQVAFLTERITQLTGHLKANPKDHASRRGLLKMIGRRKRLLSFINAREPERYQALIKRLGIRR</sequence>
<organism>
    <name type="scientific">Synechocystis sp. (strain ATCC 27184 / PCC 6803 / Kazusa)</name>
    <dbReference type="NCBI Taxonomy" id="1111708"/>
    <lineage>
        <taxon>Bacteria</taxon>
        <taxon>Bacillati</taxon>
        <taxon>Cyanobacteriota</taxon>
        <taxon>Cyanophyceae</taxon>
        <taxon>Synechococcales</taxon>
        <taxon>Merismopediaceae</taxon>
        <taxon>Synechocystis</taxon>
    </lineage>
</organism>
<evidence type="ECO:0000255" key="1">
    <source>
        <dbReference type="HAMAP-Rule" id="MF_01343"/>
    </source>
</evidence>
<evidence type="ECO:0000305" key="2"/>
<comment type="function">
    <text evidence="1">One of the primary rRNA binding proteins, it binds directly to 16S rRNA where it helps nucleate assembly of the platform of the 30S subunit by binding and bridging several RNA helices of the 16S rRNA.</text>
</comment>
<comment type="function">
    <text evidence="1">Forms an intersubunit bridge (bridge B4) with the 23S rRNA of the 50S subunit in the ribosome.</text>
</comment>
<comment type="subunit">
    <text evidence="1">Part of the 30S ribosomal subunit. Forms a bridge to the 50S subunit in the 70S ribosome, contacting the 23S rRNA.</text>
</comment>
<comment type="similarity">
    <text evidence="1">Belongs to the universal ribosomal protein uS15 family.</text>
</comment>
<accession>P72866</accession>
<feature type="chain" id="PRO_0000115568" description="Small ribosomal subunit protein uS15">
    <location>
        <begin position="1"/>
        <end position="89"/>
    </location>
</feature>
<dbReference type="EMBL" id="BA000022">
    <property type="protein sequence ID" value="BAA16882.1"/>
    <property type="molecule type" value="Genomic_DNA"/>
</dbReference>
<dbReference type="PIR" id="S74731">
    <property type="entry name" value="S74731"/>
</dbReference>
<dbReference type="SMR" id="P72866"/>
<dbReference type="FunCoup" id="P72866">
    <property type="interactions" value="392"/>
</dbReference>
<dbReference type="IntAct" id="P72866">
    <property type="interactions" value="2"/>
</dbReference>
<dbReference type="STRING" id="1148.gene:10497741"/>
<dbReference type="PaxDb" id="1148-1651956"/>
<dbReference type="EnsemblBacteria" id="BAA16882">
    <property type="protein sequence ID" value="BAA16882"/>
    <property type="gene ID" value="BAA16882"/>
</dbReference>
<dbReference type="KEGG" id="syn:ssl1784"/>
<dbReference type="eggNOG" id="COG0184">
    <property type="taxonomic scope" value="Bacteria"/>
</dbReference>
<dbReference type="InParanoid" id="P72866"/>
<dbReference type="PhylomeDB" id="P72866"/>
<dbReference type="Proteomes" id="UP000001425">
    <property type="component" value="Chromosome"/>
</dbReference>
<dbReference type="GO" id="GO:0022627">
    <property type="term" value="C:cytosolic small ribosomal subunit"/>
    <property type="evidence" value="ECO:0000318"/>
    <property type="project" value="GO_Central"/>
</dbReference>
<dbReference type="GO" id="GO:0019843">
    <property type="term" value="F:rRNA binding"/>
    <property type="evidence" value="ECO:0007669"/>
    <property type="project" value="UniProtKB-UniRule"/>
</dbReference>
<dbReference type="GO" id="GO:0003735">
    <property type="term" value="F:structural constituent of ribosome"/>
    <property type="evidence" value="ECO:0007669"/>
    <property type="project" value="InterPro"/>
</dbReference>
<dbReference type="GO" id="GO:0006412">
    <property type="term" value="P:translation"/>
    <property type="evidence" value="ECO:0007669"/>
    <property type="project" value="UniProtKB-UniRule"/>
</dbReference>
<dbReference type="CDD" id="cd00353">
    <property type="entry name" value="Ribosomal_S15p_S13e"/>
    <property type="match status" value="1"/>
</dbReference>
<dbReference type="FunFam" id="1.10.287.10:FF:000002">
    <property type="entry name" value="30S ribosomal protein S15"/>
    <property type="match status" value="1"/>
</dbReference>
<dbReference type="Gene3D" id="6.10.250.3130">
    <property type="match status" value="1"/>
</dbReference>
<dbReference type="Gene3D" id="1.10.287.10">
    <property type="entry name" value="S15/NS1, RNA-binding"/>
    <property type="match status" value="1"/>
</dbReference>
<dbReference type="HAMAP" id="MF_01343_B">
    <property type="entry name" value="Ribosomal_uS15_B"/>
    <property type="match status" value="1"/>
</dbReference>
<dbReference type="InterPro" id="IPR000589">
    <property type="entry name" value="Ribosomal_uS15"/>
</dbReference>
<dbReference type="InterPro" id="IPR005290">
    <property type="entry name" value="Ribosomal_uS15_bac-type"/>
</dbReference>
<dbReference type="InterPro" id="IPR009068">
    <property type="entry name" value="uS15_NS1_RNA-bd_sf"/>
</dbReference>
<dbReference type="NCBIfam" id="TIGR00952">
    <property type="entry name" value="S15_bact"/>
    <property type="match status" value="1"/>
</dbReference>
<dbReference type="PANTHER" id="PTHR23321">
    <property type="entry name" value="RIBOSOMAL PROTEIN S15, BACTERIAL AND ORGANELLAR"/>
    <property type="match status" value="1"/>
</dbReference>
<dbReference type="PANTHER" id="PTHR23321:SF26">
    <property type="entry name" value="SMALL RIBOSOMAL SUBUNIT PROTEIN US15M"/>
    <property type="match status" value="1"/>
</dbReference>
<dbReference type="Pfam" id="PF00312">
    <property type="entry name" value="Ribosomal_S15"/>
    <property type="match status" value="1"/>
</dbReference>
<dbReference type="SMART" id="SM01387">
    <property type="entry name" value="Ribosomal_S15"/>
    <property type="match status" value="1"/>
</dbReference>
<dbReference type="SUPFAM" id="SSF47060">
    <property type="entry name" value="S15/NS1 RNA-binding domain"/>
    <property type="match status" value="1"/>
</dbReference>
<dbReference type="PROSITE" id="PS00362">
    <property type="entry name" value="RIBOSOMAL_S15"/>
    <property type="match status" value="1"/>
</dbReference>
<reference key="1">
    <citation type="journal article" date="1996" name="DNA Res.">
        <title>Sequence analysis of the genome of the unicellular cyanobacterium Synechocystis sp. strain PCC6803. II. Sequence determination of the entire genome and assignment of potential protein-coding regions.</title>
        <authorList>
            <person name="Kaneko T."/>
            <person name="Sato S."/>
            <person name="Kotani H."/>
            <person name="Tanaka A."/>
            <person name="Asamizu E."/>
            <person name="Nakamura Y."/>
            <person name="Miyajima N."/>
            <person name="Hirosawa M."/>
            <person name="Sugiura M."/>
            <person name="Sasamoto S."/>
            <person name="Kimura T."/>
            <person name="Hosouchi T."/>
            <person name="Matsuno A."/>
            <person name="Muraki A."/>
            <person name="Nakazaki N."/>
            <person name="Naruo K."/>
            <person name="Okumura S."/>
            <person name="Shimpo S."/>
            <person name="Takeuchi C."/>
            <person name="Wada T."/>
            <person name="Watanabe A."/>
            <person name="Yamada M."/>
            <person name="Yasuda M."/>
            <person name="Tabata S."/>
        </authorList>
    </citation>
    <scope>NUCLEOTIDE SEQUENCE [LARGE SCALE GENOMIC DNA]</scope>
    <source>
        <strain>ATCC 27184 / PCC 6803 / Kazusa</strain>
    </source>
</reference>
<proteinExistence type="inferred from homology"/>
<protein>
    <recommendedName>
        <fullName evidence="1">Small ribosomal subunit protein uS15</fullName>
    </recommendedName>
    <alternativeName>
        <fullName evidence="2">30S ribosomal protein S15</fullName>
    </alternativeName>
</protein>